<accession>Q7SHI2</accession>
<sequence>MAPQSTKFALITGCGAGGIGEALILEYLRRGIHPIATLLPFESSEHLDKAGITWFKLDVTNEESVVQLKKDVSELTKGRLDFLVNNAGICYTMTAIDTDVKSVQRMFDVNLFGPMRMVHHFHDMLIASSGIIVNIGSIGGVVPFVYGSSYNASKAALAHWGNSLRVELAPLGVRVLVIISGEVGTNILKNDHGRTLPEGSYYSPMAEEFKNHVHRTPDAATDRFVYAKNVVGESLKKSPTTWFWTGSYSGVIRFLHTFFPKTVFDRWFSSLFNLAKLKEAHDAAMKKKVA</sequence>
<evidence type="ECO:0000250" key="1">
    <source>
        <dbReference type="UniProtKB" id="L0E2Z4"/>
    </source>
</evidence>
<evidence type="ECO:0000250" key="2">
    <source>
        <dbReference type="UniProtKB" id="O93868"/>
    </source>
</evidence>
<evidence type="ECO:0000255" key="3"/>
<evidence type="ECO:0000255" key="4">
    <source>
        <dbReference type="PROSITE-ProRule" id="PRU00498"/>
    </source>
</evidence>
<evidence type="ECO:0000269" key="5">
    <source>
    </source>
</evidence>
<evidence type="ECO:0000269" key="6">
    <source>
    </source>
</evidence>
<evidence type="ECO:0000269" key="7">
    <source>
    </source>
</evidence>
<evidence type="ECO:0000303" key="8">
    <source>
    </source>
</evidence>
<evidence type="ECO:0000305" key="9"/>
<evidence type="ECO:0000305" key="10">
    <source>
    </source>
</evidence>
<proteinExistence type="evidence at transcript level"/>
<name>SRDE_NEUCR</name>
<organism>
    <name type="scientific">Neurospora crassa (strain ATCC 24698 / 74-OR23-1A / CBS 708.71 / DSM 1257 / FGSC 987)</name>
    <dbReference type="NCBI Taxonomy" id="367110"/>
    <lineage>
        <taxon>Eukaryota</taxon>
        <taxon>Fungi</taxon>
        <taxon>Dikarya</taxon>
        <taxon>Ascomycota</taxon>
        <taxon>Pezizomycotina</taxon>
        <taxon>Sordariomycetes</taxon>
        <taxon>Sordariomycetidae</taxon>
        <taxon>Sordariales</taxon>
        <taxon>Sordariaceae</taxon>
        <taxon>Neurospora</taxon>
    </lineage>
</organism>
<gene>
    <name evidence="8" type="primary">srdE</name>
    <name type="ORF">NCU02922</name>
</gene>
<keyword id="KW-0325">Glycoprotein</keyword>
<keyword id="KW-0472">Membrane</keyword>
<keyword id="KW-0521">NADP</keyword>
<keyword id="KW-0560">Oxidoreductase</keyword>
<keyword id="KW-1185">Reference proteome</keyword>
<keyword id="KW-0812">Transmembrane</keyword>
<keyword id="KW-1133">Transmembrane helix</keyword>
<protein>
    <recommendedName>
        <fullName evidence="8">Short-chain dehydrogenase srdE</fullName>
        <ecNumber evidence="10">1.1.1.-</ecNumber>
    </recommendedName>
    <alternativeName>
        <fullName evidence="8">Sordarial biosynthesis cluster protein srdE</fullName>
    </alternativeName>
</protein>
<reference key="1">
    <citation type="journal article" date="2003" name="Nature">
        <title>The genome sequence of the filamentous fungus Neurospora crassa.</title>
        <authorList>
            <person name="Galagan J.E."/>
            <person name="Calvo S.E."/>
            <person name="Borkovich K.A."/>
            <person name="Selker E.U."/>
            <person name="Read N.D."/>
            <person name="Jaffe D.B."/>
            <person name="FitzHugh W."/>
            <person name="Ma L.-J."/>
            <person name="Smirnov S."/>
            <person name="Purcell S."/>
            <person name="Rehman B."/>
            <person name="Elkins T."/>
            <person name="Engels R."/>
            <person name="Wang S."/>
            <person name="Nielsen C.B."/>
            <person name="Butler J."/>
            <person name="Endrizzi M."/>
            <person name="Qui D."/>
            <person name="Ianakiev P."/>
            <person name="Bell-Pedersen D."/>
            <person name="Nelson M.A."/>
            <person name="Werner-Washburne M."/>
            <person name="Selitrennikoff C.P."/>
            <person name="Kinsey J.A."/>
            <person name="Braun E.L."/>
            <person name="Zelter A."/>
            <person name="Schulte U."/>
            <person name="Kothe G.O."/>
            <person name="Jedd G."/>
            <person name="Mewes H.-W."/>
            <person name="Staben C."/>
            <person name="Marcotte E."/>
            <person name="Greenberg D."/>
            <person name="Roy A."/>
            <person name="Foley K."/>
            <person name="Naylor J."/>
            <person name="Stange-Thomann N."/>
            <person name="Barrett R."/>
            <person name="Gnerre S."/>
            <person name="Kamal M."/>
            <person name="Kamvysselis M."/>
            <person name="Mauceli E.W."/>
            <person name="Bielke C."/>
            <person name="Rudd S."/>
            <person name="Frishman D."/>
            <person name="Krystofova S."/>
            <person name="Rasmussen C."/>
            <person name="Metzenberg R.L."/>
            <person name="Perkins D.D."/>
            <person name="Kroken S."/>
            <person name="Cogoni C."/>
            <person name="Macino G."/>
            <person name="Catcheside D.E.A."/>
            <person name="Li W."/>
            <person name="Pratt R.J."/>
            <person name="Osmani S.A."/>
            <person name="DeSouza C.P.C."/>
            <person name="Glass N.L."/>
            <person name="Orbach M.J."/>
            <person name="Berglund J.A."/>
            <person name="Voelker R."/>
            <person name="Yarden O."/>
            <person name="Plamann M."/>
            <person name="Seiler S."/>
            <person name="Dunlap J.C."/>
            <person name="Radford A."/>
            <person name="Aramayo R."/>
            <person name="Natvig D.O."/>
            <person name="Alex L.A."/>
            <person name="Mannhaupt G."/>
            <person name="Ebbole D.J."/>
            <person name="Freitag M."/>
            <person name="Paulsen I."/>
            <person name="Sachs M.S."/>
            <person name="Lander E.S."/>
            <person name="Nusbaum C."/>
            <person name="Birren B.W."/>
        </authorList>
    </citation>
    <scope>NUCLEOTIDE SEQUENCE [LARGE SCALE GENOMIC DNA]</scope>
    <source>
        <strain>ATCC 24698 / 74-OR23-1A / CBS 708.71 / DSM 1257 / FGSC 987</strain>
    </source>
</reference>
<reference key="2">
    <citation type="journal article" date="2009" name="Curr. Genet.">
        <title>A novel polyketide biosynthesis gene cluster is involved in fruiting body morphogenesis in the filamentous fungi Sordaria macrospora and Neurospora crassa.</title>
        <authorList>
            <person name="Nowrousian M."/>
        </authorList>
    </citation>
    <scope>FUNCTION</scope>
    <scope>INDUCTION</scope>
</reference>
<reference key="3">
    <citation type="journal article" date="2017" name="Environ. Microbiol.">
        <title>Production of a fungal furocoumarin by a polyketide synthase gene cluster confers the chemo-resistance of Neurospora crassa to the predation by fungivorous arthropods.</title>
        <authorList>
            <person name="Zhao Y."/>
            <person name="Ding J."/>
            <person name="Yuan W."/>
            <person name="Huang J."/>
            <person name="Huang W."/>
            <person name="Wang Y."/>
            <person name="Zheng W."/>
        </authorList>
    </citation>
    <scope>FUNCTION</scope>
    <scope>INDUCTION</scope>
</reference>
<reference key="4">
    <citation type="journal article" date="2019" name="J. Nat. Prod.">
        <title>Genome mining reveals Neurospora crassa can produce the salicylaldehyde sordarial.</title>
        <authorList>
            <person name="Zhao Z."/>
            <person name="Ying Y."/>
            <person name="Hung Y.S."/>
            <person name="Tang Y."/>
        </authorList>
    </citation>
    <scope>FUNCTION</scope>
    <scope>PATHWAY</scope>
</reference>
<feature type="chain" id="PRO_0000449334" description="Short-chain dehydrogenase srdE">
    <location>
        <begin position="1"/>
        <end position="290"/>
    </location>
</feature>
<feature type="transmembrane region" description="Helical" evidence="3">
    <location>
        <begin position="125"/>
        <end position="145"/>
    </location>
</feature>
<feature type="active site" description="Proton donor" evidence="2">
    <location>
        <position position="150"/>
    </location>
</feature>
<feature type="active site" description="Lowers pKa of active site Tyr" evidence="2">
    <location>
        <position position="154"/>
    </location>
</feature>
<feature type="binding site" evidence="1">
    <location>
        <position position="11"/>
    </location>
    <ligand>
        <name>NADP(+)</name>
        <dbReference type="ChEBI" id="CHEBI:58349"/>
    </ligand>
</feature>
<feature type="binding site" evidence="1">
    <location>
        <position position="37"/>
    </location>
    <ligand>
        <name>NADP(+)</name>
        <dbReference type="ChEBI" id="CHEBI:58349"/>
    </ligand>
</feature>
<feature type="binding site" evidence="1">
    <location>
        <position position="58"/>
    </location>
    <ligand>
        <name>NADP(+)</name>
        <dbReference type="ChEBI" id="CHEBI:58349"/>
    </ligand>
</feature>
<feature type="binding site" evidence="2">
    <location>
        <position position="86"/>
    </location>
    <ligand>
        <name>NADP(+)</name>
        <dbReference type="ChEBI" id="CHEBI:58349"/>
    </ligand>
</feature>
<feature type="binding site" evidence="2">
    <location>
        <position position="150"/>
    </location>
    <ligand>
        <name>NADP(+)</name>
        <dbReference type="ChEBI" id="CHEBI:58349"/>
    </ligand>
</feature>
<feature type="binding site" evidence="2">
    <location>
        <position position="154"/>
    </location>
    <ligand>
        <name>NADP(+)</name>
        <dbReference type="ChEBI" id="CHEBI:58349"/>
    </ligand>
</feature>
<feature type="binding site" evidence="2">
    <location>
        <position position="183"/>
    </location>
    <ligand>
        <name>NADP(+)</name>
        <dbReference type="ChEBI" id="CHEBI:58349"/>
    </ligand>
</feature>
<feature type="binding site" evidence="1">
    <location>
        <position position="185"/>
    </location>
    <ligand>
        <name>NADP(+)</name>
        <dbReference type="ChEBI" id="CHEBI:58349"/>
    </ligand>
</feature>
<feature type="glycosylation site" description="N-linked (GlcNAc...) asparagine" evidence="4">
    <location>
        <position position="151"/>
    </location>
</feature>
<dbReference type="EC" id="1.1.1.-" evidence="10"/>
<dbReference type="EMBL" id="CM002236">
    <property type="protein sequence ID" value="EAA36368.1"/>
    <property type="molecule type" value="Genomic_DNA"/>
</dbReference>
<dbReference type="RefSeq" id="XP_965604.1">
    <property type="nucleotide sequence ID" value="XM_960511.1"/>
</dbReference>
<dbReference type="SMR" id="Q7SHI2"/>
<dbReference type="FunCoup" id="Q7SHI2">
    <property type="interactions" value="229"/>
</dbReference>
<dbReference type="STRING" id="367110.Q7SHI2"/>
<dbReference type="GlyCosmos" id="Q7SHI2">
    <property type="glycosylation" value="1 site, No reported glycans"/>
</dbReference>
<dbReference type="PaxDb" id="5141-EFNCRP00000002422"/>
<dbReference type="EnsemblFungi" id="EAA36368">
    <property type="protein sequence ID" value="EAA36368"/>
    <property type="gene ID" value="NCU02922"/>
</dbReference>
<dbReference type="GeneID" id="3881729"/>
<dbReference type="KEGG" id="ncr:NCU02922"/>
<dbReference type="VEuPathDB" id="FungiDB:NCU02922"/>
<dbReference type="HOGENOM" id="CLU_010194_2_9_1"/>
<dbReference type="InParanoid" id="Q7SHI2"/>
<dbReference type="OMA" id="GPCDWHI"/>
<dbReference type="OrthoDB" id="2102561at2759"/>
<dbReference type="Proteomes" id="UP000001805">
    <property type="component" value="Chromosome 1, Linkage Group I"/>
</dbReference>
<dbReference type="GO" id="GO:0005783">
    <property type="term" value="C:endoplasmic reticulum"/>
    <property type="evidence" value="ECO:0000318"/>
    <property type="project" value="GO_Central"/>
</dbReference>
<dbReference type="GO" id="GO:0005811">
    <property type="term" value="C:lipid droplet"/>
    <property type="evidence" value="ECO:0000318"/>
    <property type="project" value="GO_Central"/>
</dbReference>
<dbReference type="GO" id="GO:0016020">
    <property type="term" value="C:membrane"/>
    <property type="evidence" value="ECO:0007669"/>
    <property type="project" value="UniProtKB-SubCell"/>
</dbReference>
<dbReference type="GO" id="GO:0000140">
    <property type="term" value="F:acylglycerone-phosphate reductase (NADP+) activity"/>
    <property type="evidence" value="ECO:0000318"/>
    <property type="project" value="GO_Central"/>
</dbReference>
<dbReference type="GO" id="GO:0004806">
    <property type="term" value="F:triacylglycerol lipase activity"/>
    <property type="evidence" value="ECO:0000318"/>
    <property type="project" value="GO_Central"/>
</dbReference>
<dbReference type="GO" id="GO:0006654">
    <property type="term" value="P:phosphatidic acid biosynthetic process"/>
    <property type="evidence" value="ECO:0000318"/>
    <property type="project" value="GO_Central"/>
</dbReference>
<dbReference type="GO" id="GO:0019433">
    <property type="term" value="P:triglyceride catabolic process"/>
    <property type="evidence" value="ECO:0000318"/>
    <property type="project" value="GO_Central"/>
</dbReference>
<dbReference type="CDD" id="cd05374">
    <property type="entry name" value="17beta-HSD-like_SDR_c"/>
    <property type="match status" value="1"/>
</dbReference>
<dbReference type="FunFam" id="3.40.50.720:FF:001088">
    <property type="entry name" value="NAD(P)-binding protein"/>
    <property type="match status" value="1"/>
</dbReference>
<dbReference type="Gene3D" id="3.40.50.720">
    <property type="entry name" value="NAD(P)-binding Rossmann-like Domain"/>
    <property type="match status" value="1"/>
</dbReference>
<dbReference type="InterPro" id="IPR036291">
    <property type="entry name" value="NAD(P)-bd_dom_sf"/>
</dbReference>
<dbReference type="InterPro" id="IPR020904">
    <property type="entry name" value="Sc_DH/Rdtase_CS"/>
</dbReference>
<dbReference type="InterPro" id="IPR002347">
    <property type="entry name" value="SDR_fam"/>
</dbReference>
<dbReference type="PANTHER" id="PTHR44169">
    <property type="entry name" value="NADPH-DEPENDENT 1-ACYLDIHYDROXYACETONE PHOSPHATE REDUCTASE"/>
    <property type="match status" value="1"/>
</dbReference>
<dbReference type="PANTHER" id="PTHR44169:SF3">
    <property type="entry name" value="SHORT-CHAIN DEHYDROGENASE SRDE"/>
    <property type="match status" value="1"/>
</dbReference>
<dbReference type="Pfam" id="PF00106">
    <property type="entry name" value="adh_short"/>
    <property type="match status" value="1"/>
</dbReference>
<dbReference type="PRINTS" id="PR00081">
    <property type="entry name" value="GDHRDH"/>
</dbReference>
<dbReference type="PRINTS" id="PR00080">
    <property type="entry name" value="SDRFAMILY"/>
</dbReference>
<dbReference type="SUPFAM" id="SSF51735">
    <property type="entry name" value="NAD(P)-binding Rossmann-fold domains"/>
    <property type="match status" value="1"/>
</dbReference>
<dbReference type="PROSITE" id="PS00061">
    <property type="entry name" value="ADH_SHORT"/>
    <property type="match status" value="1"/>
</dbReference>
<comment type="function">
    <text evidence="5 6 7">Short-chain dehydrogenase; part of the gene cluster that mediates the biosynthesis of sordarial, a salicylic aldehyde structurally related to the phytotoxin pyriculol (PubMed:19277664, PubMed:28485098, PubMed:30908040). The most interesting aspect of this pathway is formation of an aromatic product from the highly reducing polyketide synthase srdA (PubMed:30908040). SrdA synthesizes a reduced polyketide chain from one molecule of acetyl-CoA and five molecules of malonyl-CoA (PubMed:30908040). The polyketide chain is then reductively released as an aldehyde (PubMed:30908040). The oxidoreductases srdC, srdD and srdE then oxidize one of the hydroxy groups to facilitate the intramolecular aldol condensation, followed by dehydration to yield a salicylic aldehyde (PubMed:30908040). This aldehyde can undergo facile reduction by endogenous reductases to yield the alcohol 1-hydroxy-2-hydroxymethyl-3-pent-1,3-dienylbenzene (PubMed:30908040). The flavin-dependent srdI counteract against the propensity of the aldehydes to be reduced under physiological conditions and is responsible for reoxidizing 1-hydroxy-2-hydroxymethyl-3-pent-1,3-dienylbenzene back to the salicylic aldehyde (PubMed:30908040). This salicylic aldehyde is then selectively epoxidized by the cupin-domain-containing oxidoreductase srdB to yield the epoxide, which can be hydrolyzed stereoselectively by the hydrolase srdG to give the final product sordarial (PubMed:30908040).</text>
</comment>
<comment type="subcellular location">
    <subcellularLocation>
        <location evidence="3">Membrane</location>
        <topology evidence="3">Single-pass membrane protein</topology>
    </subcellularLocation>
</comment>
<comment type="induction">
    <text evidence="5 6">Expression is up-regulated during sexual development (PubMed:19277664). Expression is also up-regulated during confrontation with the arthropod fungivore Drosophila melanogaster (PubMed:28485098).</text>
</comment>
<comment type="similarity">
    <text evidence="9">Belongs to the short-chain dehydrogenases/reductases (SDR) family.</text>
</comment>
<comment type="caution">
    <text evidence="6 7">A recent genetics report associated srdA and its cluster with the biosynthesis of furanocoumarin neurosporin A, a metabolite produced by N.crassa for chemoresistance against predation by arthropod fungivores (PubMed:28485098). However, based on the gene cluster organization and predicted gene functions, this cluster is unlikely to be involved in neurosporin A biosynthesis, but instead produces compounds similar to pyriculol (PubMed:30908040).</text>
</comment>